<feature type="chain" id="PRO_0000090761" description="Pyruvate decarboxylase">
    <location>
        <begin position="1"/>
        <end position="567"/>
    </location>
</feature>
<feature type="binding site" evidence="2">
    <location>
        <position position="28"/>
    </location>
    <ligand>
        <name>pyruvate</name>
        <dbReference type="ChEBI" id="CHEBI:15361"/>
        <note>ligand shared between two neighboring subunits</note>
    </ligand>
</feature>
<feature type="binding site" evidence="2">
    <location>
        <position position="117"/>
    </location>
    <ligand>
        <name>pyruvate</name>
        <dbReference type="ChEBI" id="CHEBI:15361"/>
        <note>ligand shared between two neighboring subunits</note>
    </ligand>
</feature>
<feature type="binding site" evidence="2">
    <location>
        <position position="393"/>
    </location>
    <ligand>
        <name>thiamine diphosphate</name>
        <dbReference type="ChEBI" id="CHEBI:58937"/>
    </ligand>
</feature>
<feature type="binding site" evidence="2">
    <location>
        <begin position="416"/>
        <end position="418"/>
    </location>
    <ligand>
        <name>thiamine diphosphate</name>
        <dbReference type="ChEBI" id="CHEBI:58937"/>
    </ligand>
</feature>
<feature type="binding site" evidence="2">
    <location>
        <position position="447"/>
    </location>
    <ligand>
        <name>Mg(2+)</name>
        <dbReference type="ChEBI" id="CHEBI:18420"/>
    </ligand>
</feature>
<feature type="binding site" evidence="2">
    <location>
        <begin position="448"/>
        <end position="449"/>
    </location>
    <ligand>
        <name>thiamine diphosphate</name>
        <dbReference type="ChEBI" id="CHEBI:58937"/>
    </ligand>
</feature>
<feature type="binding site" evidence="2">
    <location>
        <begin position="475"/>
        <end position="480"/>
    </location>
    <ligand>
        <name>thiamine diphosphate</name>
        <dbReference type="ChEBI" id="CHEBI:58937"/>
    </ligand>
</feature>
<feature type="binding site" evidence="2">
    <location>
        <position position="475"/>
    </location>
    <ligand>
        <name>Mg(2+)</name>
        <dbReference type="ChEBI" id="CHEBI:18420"/>
    </ligand>
</feature>
<feature type="binding site" evidence="2">
    <location>
        <position position="477"/>
    </location>
    <ligand>
        <name>Mg(2+)</name>
        <dbReference type="ChEBI" id="CHEBI:18420"/>
    </ligand>
</feature>
<feature type="binding site" evidence="2">
    <location>
        <position position="481"/>
    </location>
    <ligand>
        <name>pyruvate</name>
        <dbReference type="ChEBI" id="CHEBI:15361"/>
        <note>ligand shared between two neighboring subunits</note>
    </ligand>
</feature>
<proteinExistence type="evidence at protein level"/>
<comment type="catalytic activity">
    <reaction>
        <text>a 2-oxocarboxylate + H(+) = an aldehyde + CO2</text>
        <dbReference type="Rhea" id="RHEA:11628"/>
        <dbReference type="ChEBI" id="CHEBI:15378"/>
        <dbReference type="ChEBI" id="CHEBI:16526"/>
        <dbReference type="ChEBI" id="CHEBI:17478"/>
        <dbReference type="ChEBI" id="CHEBI:35179"/>
        <dbReference type="EC" id="4.1.1.1"/>
    </reaction>
</comment>
<comment type="catalytic activity">
    <reaction evidence="2">
        <text>pyruvate + H(+) = acetaldehyde + CO2</text>
        <dbReference type="Rhea" id="RHEA:45484"/>
        <dbReference type="ChEBI" id="CHEBI:15343"/>
        <dbReference type="ChEBI" id="CHEBI:15361"/>
        <dbReference type="ChEBI" id="CHEBI:15378"/>
        <dbReference type="ChEBI" id="CHEBI:16526"/>
    </reaction>
</comment>
<comment type="cofactor">
    <cofactor evidence="2">
        <name>Mg(2+)</name>
        <dbReference type="ChEBI" id="CHEBI:18420"/>
    </cofactor>
    <text evidence="2">Binds 1 Mg(2+) per subunit.</text>
</comment>
<comment type="cofactor">
    <cofactor evidence="2">
        <name>thiamine diphosphate</name>
        <dbReference type="ChEBI" id="CHEBI:58937"/>
    </cofactor>
    <text evidence="2">Binds 1 thiamine pyrophosphate per subunit.</text>
</comment>
<comment type="subunit">
    <text evidence="1">Homotetramer.</text>
</comment>
<comment type="subcellular location">
    <subcellularLocation>
        <location evidence="3">Cytoplasm</location>
    </subcellularLocation>
</comment>
<comment type="miscellaneous">
    <text>Has antigenic properties. Elicits a specific immune response in systemic candidiasis human patients undergoing malignant hematological disorders.</text>
</comment>
<comment type="similarity">
    <text evidence="4">Belongs to the TPP enzyme family.</text>
</comment>
<keyword id="KW-0963">Cytoplasm</keyword>
<keyword id="KW-0210">Decarboxylase</keyword>
<keyword id="KW-0903">Direct protein sequencing</keyword>
<keyword id="KW-0456">Lyase</keyword>
<keyword id="KW-0460">Magnesium</keyword>
<keyword id="KW-0479">Metal-binding</keyword>
<keyword id="KW-1185">Reference proteome</keyword>
<keyword id="KW-0786">Thiamine pyrophosphate</keyword>
<sequence>MSEITLGRFFFERLHQLKVDTVFGLPGDFNLALLDKIYEVEGMRWAGNANELNAGYAADGYARVNPNGLSALVSTFGVGELSLTNAIAGSYSEHVGVINLVGVPSSSAQAKQLLLHHTLGNGDFTVFHRMFKNISQTSAFIADINSAPAEIDRCIRDAYVYQRPVYIGLPSNLVDMKVPKSLLDKKIDLSLHPNDPESQTEVIETVEKLISEASNPVILVDACAIRHNCKPEVAKLIEETQFPVFTTPMGKSSVDESNPRFGGVYVGSLSKPEVKESVESADLILSIGALLSDFNTGSFSYGYKTRNIVEFHSDYTKIRQATFPGVQMKEALQKLLTTVKKSINPNYTPVPVPETKLINTPAAPSTPLTQEYLWTKVSSWFREGDIIITETGTSAFGIVQSRFPKNSIGISQVLWGSIGYTVGATCGAAMAAQELDPKRRVILFVGDGSLQLTVQEISTMCKWECNNTYLFVLNNDGYTIERLIHGEKAQYNDIQPWNNLQLLPLFNAKDYETKRISTVGELNDLFADKAFAVPDKIRMVEVMLPTMDAPANLVAQAKLSEKTNAEQ</sequence>
<evidence type="ECO:0000250" key="1"/>
<evidence type="ECO:0000250" key="2">
    <source>
        <dbReference type="UniProtKB" id="P06169"/>
    </source>
</evidence>
<evidence type="ECO:0000269" key="3">
    <source>
    </source>
</evidence>
<evidence type="ECO:0000305" key="4"/>
<reference key="1">
    <citation type="journal article" date="2004" name="Proc. Natl. Acad. Sci. U.S.A.">
        <title>The diploid genome sequence of Candida albicans.</title>
        <authorList>
            <person name="Jones T."/>
            <person name="Federspiel N.A."/>
            <person name="Chibana H."/>
            <person name="Dungan J."/>
            <person name="Kalman S."/>
            <person name="Magee B.B."/>
            <person name="Newport G."/>
            <person name="Thorstenson Y.R."/>
            <person name="Agabian N."/>
            <person name="Magee P.T."/>
            <person name="Davis R.W."/>
            <person name="Scherer S."/>
        </authorList>
    </citation>
    <scope>NUCLEOTIDE SEQUENCE [LARGE SCALE GENOMIC DNA]</scope>
    <source>
        <strain>SC5314 / ATCC MYA-2876</strain>
    </source>
</reference>
<reference key="2">
    <citation type="journal article" date="2007" name="Genome Biol.">
        <title>Assembly of the Candida albicans genome into sixteen supercontigs aligned on the eight chromosomes.</title>
        <authorList>
            <person name="van het Hoog M."/>
            <person name="Rast T.J."/>
            <person name="Martchenko M."/>
            <person name="Grindle S."/>
            <person name="Dignard D."/>
            <person name="Hogues H."/>
            <person name="Cuomo C."/>
            <person name="Berriman M."/>
            <person name="Scherer S."/>
            <person name="Magee B.B."/>
            <person name="Whiteway M."/>
            <person name="Chibana H."/>
            <person name="Nantel A."/>
            <person name="Magee P.T."/>
        </authorList>
    </citation>
    <scope>GENOME REANNOTATION</scope>
    <source>
        <strain>SC5314 / ATCC MYA-2876</strain>
    </source>
</reference>
<reference key="3">
    <citation type="journal article" date="2013" name="Genome Biol.">
        <title>Assembly of a phased diploid Candida albicans genome facilitates allele-specific measurements and provides a simple model for repeat and indel structure.</title>
        <authorList>
            <person name="Muzzey D."/>
            <person name="Schwartz K."/>
            <person name="Weissman J.S."/>
            <person name="Sherlock G."/>
        </authorList>
    </citation>
    <scope>NUCLEOTIDE SEQUENCE [LARGE SCALE GENOMIC DNA]</scope>
    <scope>GENOME REANNOTATION</scope>
    <source>
        <strain>SC5314 / ATCC MYA-2876</strain>
    </source>
</reference>
<reference key="4">
    <citation type="journal article" date="2004" name="Proteomics">
        <title>Proteomics-based identification of novel Candida albicans antigens for diagnosis of systemic candidiasis in patients with underlying hematological malignancies.</title>
        <authorList>
            <person name="Pitarch A."/>
            <person name="Abian J."/>
            <person name="Carrascal M."/>
            <person name="Sanchez M."/>
            <person name="Nombela C."/>
            <person name="Gil C."/>
        </authorList>
    </citation>
    <scope>PROTEIN SEQUENCE OF 37-44; 48-64; 265-275; 309-317 AND 344-356</scope>
    <scope>SUBCELLULAR LOCATION</scope>
    <scope>ANTIGENICITY</scope>
    <source>
        <strain>SC5314 / ATCC MYA-2876</strain>
        <tissue>Protoplast</tissue>
    </source>
</reference>
<accession>P83779</accession>
<accession>A0A1D8PMK9</accession>
<accession>Q5A1E2</accession>
<organism>
    <name type="scientific">Candida albicans (strain SC5314 / ATCC MYA-2876)</name>
    <name type="common">Yeast</name>
    <dbReference type="NCBI Taxonomy" id="237561"/>
    <lineage>
        <taxon>Eukaryota</taxon>
        <taxon>Fungi</taxon>
        <taxon>Dikarya</taxon>
        <taxon>Ascomycota</taxon>
        <taxon>Saccharomycotina</taxon>
        <taxon>Pichiomycetes</taxon>
        <taxon>Debaryomycetaceae</taxon>
        <taxon>Candida/Lodderomyces clade</taxon>
        <taxon>Candida</taxon>
    </lineage>
</organism>
<name>PDC1_CANAL</name>
<dbReference type="EC" id="4.1.1.1"/>
<dbReference type="EMBL" id="CP017626">
    <property type="protein sequence ID" value="AOW29380.1"/>
    <property type="molecule type" value="Genomic_DNA"/>
</dbReference>
<dbReference type="RefSeq" id="XP_715533.1">
    <property type="nucleotide sequence ID" value="XM_710440.1"/>
</dbReference>
<dbReference type="SMR" id="P83779"/>
<dbReference type="BioGRID" id="1225819">
    <property type="interactions" value="4"/>
</dbReference>
<dbReference type="FunCoup" id="P83779">
    <property type="interactions" value="1056"/>
</dbReference>
<dbReference type="STRING" id="237561.P83779"/>
<dbReference type="EnsemblFungi" id="C4_06570C_A-T">
    <property type="protein sequence ID" value="C4_06570C_A-T-p1"/>
    <property type="gene ID" value="C4_06570C_A"/>
</dbReference>
<dbReference type="GeneID" id="3642780"/>
<dbReference type="KEGG" id="cal:CAALFM_C406570CA"/>
<dbReference type="CGD" id="CAL0000201027">
    <property type="gene designation" value="PDC11"/>
</dbReference>
<dbReference type="VEuPathDB" id="FungiDB:C4_06570C_A"/>
<dbReference type="eggNOG" id="KOG1184">
    <property type="taxonomic scope" value="Eukaryota"/>
</dbReference>
<dbReference type="HOGENOM" id="CLU_013748_0_2_1"/>
<dbReference type="InParanoid" id="P83779"/>
<dbReference type="OMA" id="IHGPEQR"/>
<dbReference type="OrthoDB" id="3970464at2759"/>
<dbReference type="PRO" id="PR:P83779"/>
<dbReference type="Proteomes" id="UP000000559">
    <property type="component" value="Chromosome 4"/>
</dbReference>
<dbReference type="GO" id="GO:0009986">
    <property type="term" value="C:cell surface"/>
    <property type="evidence" value="ECO:0000314"/>
    <property type="project" value="CGD"/>
</dbReference>
<dbReference type="GO" id="GO:0005829">
    <property type="term" value="C:cytosol"/>
    <property type="evidence" value="ECO:0000318"/>
    <property type="project" value="GO_Central"/>
</dbReference>
<dbReference type="GO" id="GO:0062040">
    <property type="term" value="C:fungal biofilm matrix"/>
    <property type="evidence" value="ECO:0000314"/>
    <property type="project" value="CGD"/>
</dbReference>
<dbReference type="GO" id="GO:0030446">
    <property type="term" value="C:hyphal cell wall"/>
    <property type="evidence" value="ECO:0000314"/>
    <property type="project" value="CGD"/>
</dbReference>
<dbReference type="GO" id="GO:0005634">
    <property type="term" value="C:nucleus"/>
    <property type="evidence" value="ECO:0000318"/>
    <property type="project" value="GO_Central"/>
</dbReference>
<dbReference type="GO" id="GO:0005886">
    <property type="term" value="C:plasma membrane"/>
    <property type="evidence" value="ECO:0000314"/>
    <property type="project" value="CGD"/>
</dbReference>
<dbReference type="GO" id="GO:0030445">
    <property type="term" value="C:yeast-form cell wall"/>
    <property type="evidence" value="ECO:0000314"/>
    <property type="project" value="CGD"/>
</dbReference>
<dbReference type="GO" id="GO:0000287">
    <property type="term" value="F:magnesium ion binding"/>
    <property type="evidence" value="ECO:0007669"/>
    <property type="project" value="InterPro"/>
</dbReference>
<dbReference type="GO" id="GO:0004737">
    <property type="term" value="F:pyruvate decarboxylase activity"/>
    <property type="evidence" value="ECO:0000318"/>
    <property type="project" value="GO_Central"/>
</dbReference>
<dbReference type="GO" id="GO:0030976">
    <property type="term" value="F:thiamine pyrophosphate binding"/>
    <property type="evidence" value="ECO:0007669"/>
    <property type="project" value="InterPro"/>
</dbReference>
<dbReference type="GO" id="GO:0000949">
    <property type="term" value="P:aromatic amino acid family catabolic process to alcohol via Ehrlich pathway"/>
    <property type="evidence" value="ECO:0000318"/>
    <property type="project" value="GO_Central"/>
</dbReference>
<dbReference type="CDD" id="cd02005">
    <property type="entry name" value="TPP_PDC_IPDC"/>
    <property type="match status" value="1"/>
</dbReference>
<dbReference type="CDD" id="cd07038">
    <property type="entry name" value="TPP_PYR_PDC_IPDC_like"/>
    <property type="match status" value="1"/>
</dbReference>
<dbReference type="FunFam" id="3.40.50.1220:FF:000018">
    <property type="entry name" value="Pyruvate decarboxylase isozyme"/>
    <property type="match status" value="1"/>
</dbReference>
<dbReference type="FunFam" id="3.40.50.970:FF:000019">
    <property type="entry name" value="Pyruvate decarboxylase isozyme"/>
    <property type="match status" value="1"/>
</dbReference>
<dbReference type="FunFam" id="3.40.50.970:FF:000024">
    <property type="entry name" value="Pyruvate decarboxylase isozyme"/>
    <property type="match status" value="1"/>
</dbReference>
<dbReference type="Gene3D" id="3.40.50.970">
    <property type="match status" value="2"/>
</dbReference>
<dbReference type="Gene3D" id="3.40.50.1220">
    <property type="entry name" value="TPP-binding domain"/>
    <property type="match status" value="1"/>
</dbReference>
<dbReference type="InterPro" id="IPR029035">
    <property type="entry name" value="DHS-like_NAD/FAD-binding_dom"/>
</dbReference>
<dbReference type="InterPro" id="IPR012110">
    <property type="entry name" value="PDC/IPDC-like"/>
</dbReference>
<dbReference type="InterPro" id="IPR029061">
    <property type="entry name" value="THDP-binding"/>
</dbReference>
<dbReference type="InterPro" id="IPR012000">
    <property type="entry name" value="Thiamin_PyroP_enz_cen_dom"/>
</dbReference>
<dbReference type="InterPro" id="IPR012001">
    <property type="entry name" value="Thiamin_PyroP_enz_TPP-bd_dom"/>
</dbReference>
<dbReference type="InterPro" id="IPR000399">
    <property type="entry name" value="TPP-bd_CS"/>
</dbReference>
<dbReference type="InterPro" id="IPR011766">
    <property type="entry name" value="TPP_enzyme_TPP-bd"/>
</dbReference>
<dbReference type="InterPro" id="IPR047214">
    <property type="entry name" value="TPP_PDC_IPDC"/>
</dbReference>
<dbReference type="InterPro" id="IPR047213">
    <property type="entry name" value="TPP_PYR_PDC_IPDC-like"/>
</dbReference>
<dbReference type="PANTHER" id="PTHR43452">
    <property type="entry name" value="PYRUVATE DECARBOXYLASE"/>
    <property type="match status" value="1"/>
</dbReference>
<dbReference type="PANTHER" id="PTHR43452:SF30">
    <property type="entry name" value="PYRUVATE DECARBOXYLASE ISOZYME 1-RELATED"/>
    <property type="match status" value="1"/>
</dbReference>
<dbReference type="Pfam" id="PF02775">
    <property type="entry name" value="TPP_enzyme_C"/>
    <property type="match status" value="1"/>
</dbReference>
<dbReference type="Pfam" id="PF00205">
    <property type="entry name" value="TPP_enzyme_M"/>
    <property type="match status" value="1"/>
</dbReference>
<dbReference type="Pfam" id="PF02776">
    <property type="entry name" value="TPP_enzyme_N"/>
    <property type="match status" value="1"/>
</dbReference>
<dbReference type="PIRSF" id="PIRSF036565">
    <property type="entry name" value="Pyruvt_ip_decrb"/>
    <property type="match status" value="1"/>
</dbReference>
<dbReference type="SUPFAM" id="SSF52467">
    <property type="entry name" value="DHS-like NAD/FAD-binding domain"/>
    <property type="match status" value="1"/>
</dbReference>
<dbReference type="SUPFAM" id="SSF52518">
    <property type="entry name" value="Thiamin diphosphate-binding fold (THDP-binding)"/>
    <property type="match status" value="2"/>
</dbReference>
<dbReference type="PROSITE" id="PS00187">
    <property type="entry name" value="TPP_ENZYMES"/>
    <property type="match status" value="1"/>
</dbReference>
<protein>
    <recommendedName>
        <fullName>Pyruvate decarboxylase</fullName>
        <ecNumber>4.1.1.1</ecNumber>
    </recommendedName>
</protein>
<gene>
    <name type="primary">PDC11</name>
    <name type="synonym">PDC1</name>
    <name type="ordered locus">CAALFM_C406570CA</name>
    <name type="ORF">CaO19.10395</name>
    <name type="ORF">CaO19.2877</name>
</gene>